<name>BTUC_SALAR</name>
<gene>
    <name evidence="1" type="primary">btuC</name>
    <name type="ordered locus">SARI_01629</name>
</gene>
<feature type="chain" id="PRO_1000083956" description="Vitamin B12 import system permease protein BtuC">
    <location>
        <begin position="1"/>
        <end position="329"/>
    </location>
</feature>
<feature type="transmembrane region" description="Helical" evidence="1">
    <location>
        <begin position="18"/>
        <end position="38"/>
    </location>
</feature>
<feature type="transmembrane region" description="Helical" evidence="1">
    <location>
        <begin position="64"/>
        <end position="84"/>
    </location>
</feature>
<feature type="transmembrane region" description="Helical" evidence="1">
    <location>
        <begin position="91"/>
        <end position="111"/>
    </location>
</feature>
<feature type="transmembrane region" description="Helical" evidence="1">
    <location>
        <begin position="115"/>
        <end position="135"/>
    </location>
</feature>
<feature type="transmembrane region" description="Helical" evidence="1">
    <location>
        <begin position="149"/>
        <end position="169"/>
    </location>
</feature>
<feature type="transmembrane region" description="Helical" evidence="1">
    <location>
        <begin position="191"/>
        <end position="208"/>
    </location>
</feature>
<feature type="transmembrane region" description="Helical" evidence="1">
    <location>
        <begin position="243"/>
        <end position="263"/>
    </location>
</feature>
<feature type="transmembrane region" description="Helical" evidence="1">
    <location>
        <begin position="277"/>
        <end position="297"/>
    </location>
</feature>
<feature type="transmembrane region" description="Helical" evidence="1">
    <location>
        <begin position="305"/>
        <end position="325"/>
    </location>
</feature>
<evidence type="ECO:0000255" key="1">
    <source>
        <dbReference type="HAMAP-Rule" id="MF_01004"/>
    </source>
</evidence>
<reference key="1">
    <citation type="submission" date="2007-11" db="EMBL/GenBank/DDBJ databases">
        <authorList>
            <consortium name="The Salmonella enterica serovar Arizonae Genome Sequencing Project"/>
            <person name="McClelland M."/>
            <person name="Sanderson E.K."/>
            <person name="Porwollik S."/>
            <person name="Spieth J."/>
            <person name="Clifton W.S."/>
            <person name="Fulton R."/>
            <person name="Chunyan W."/>
            <person name="Wollam A."/>
            <person name="Shah N."/>
            <person name="Pepin K."/>
            <person name="Bhonagiri V."/>
            <person name="Nash W."/>
            <person name="Johnson M."/>
            <person name="Thiruvilangam P."/>
            <person name="Wilson R."/>
        </authorList>
    </citation>
    <scope>NUCLEOTIDE SEQUENCE [LARGE SCALE GENOMIC DNA]</scope>
    <source>
        <strain>ATCC BAA-731 / CDC346-86 / RSK2980</strain>
    </source>
</reference>
<organism>
    <name type="scientific">Salmonella arizonae (strain ATCC BAA-731 / CDC346-86 / RSK2980)</name>
    <dbReference type="NCBI Taxonomy" id="41514"/>
    <lineage>
        <taxon>Bacteria</taxon>
        <taxon>Pseudomonadati</taxon>
        <taxon>Pseudomonadota</taxon>
        <taxon>Gammaproteobacteria</taxon>
        <taxon>Enterobacterales</taxon>
        <taxon>Enterobacteriaceae</taxon>
        <taxon>Salmonella</taxon>
    </lineage>
</organism>
<proteinExistence type="inferred from homology"/>
<protein>
    <recommendedName>
        <fullName evidence="1">Vitamin B12 import system permease protein BtuC</fullName>
    </recommendedName>
</protein>
<dbReference type="EMBL" id="CP000880">
    <property type="protein sequence ID" value="ABX21521.1"/>
    <property type="molecule type" value="Genomic_DNA"/>
</dbReference>
<dbReference type="SMR" id="A9MFB6"/>
<dbReference type="STRING" id="41514.SARI_01629"/>
<dbReference type="KEGG" id="ses:SARI_01629"/>
<dbReference type="HOGENOM" id="CLU_013016_0_3_6"/>
<dbReference type="Proteomes" id="UP000002084">
    <property type="component" value="Chromosome"/>
</dbReference>
<dbReference type="GO" id="GO:0005886">
    <property type="term" value="C:plasma membrane"/>
    <property type="evidence" value="ECO:0007669"/>
    <property type="project" value="UniProtKB-SubCell"/>
</dbReference>
<dbReference type="GO" id="GO:0090482">
    <property type="term" value="F:vitamin transmembrane transporter activity"/>
    <property type="evidence" value="ECO:0007669"/>
    <property type="project" value="UniProtKB-UniRule"/>
</dbReference>
<dbReference type="GO" id="GO:0015889">
    <property type="term" value="P:cobalamin transport"/>
    <property type="evidence" value="ECO:0007669"/>
    <property type="project" value="UniProtKB-UniRule"/>
</dbReference>
<dbReference type="CDD" id="cd06550">
    <property type="entry name" value="TM_ABC_iron-siderophores_like"/>
    <property type="match status" value="1"/>
</dbReference>
<dbReference type="FunFam" id="1.10.3470.10:FF:000001">
    <property type="entry name" value="Vitamin B12 ABC transporter permease BtuC"/>
    <property type="match status" value="1"/>
</dbReference>
<dbReference type="Gene3D" id="1.10.3470.10">
    <property type="entry name" value="ABC transporter involved in vitamin B12 uptake, BtuC"/>
    <property type="match status" value="1"/>
</dbReference>
<dbReference type="HAMAP" id="MF_01004">
    <property type="entry name" value="BtuC"/>
    <property type="match status" value="1"/>
</dbReference>
<dbReference type="InterPro" id="IPR037294">
    <property type="entry name" value="ABC_BtuC-like"/>
</dbReference>
<dbReference type="InterPro" id="IPR023691">
    <property type="entry name" value="ABC_transptr_BtuC"/>
</dbReference>
<dbReference type="InterPro" id="IPR000522">
    <property type="entry name" value="ABC_transptr_permease_BtuC"/>
</dbReference>
<dbReference type="NCBIfam" id="NF003001">
    <property type="entry name" value="PRK03784.1"/>
    <property type="match status" value="1"/>
</dbReference>
<dbReference type="PANTHER" id="PTHR30472">
    <property type="entry name" value="FERRIC ENTEROBACTIN TRANSPORT SYSTEM PERMEASE PROTEIN"/>
    <property type="match status" value="1"/>
</dbReference>
<dbReference type="PANTHER" id="PTHR30472:SF29">
    <property type="entry name" value="VITAMIN B12 IMPORT SYSTEM PERMEASE PROTEIN BTUC"/>
    <property type="match status" value="1"/>
</dbReference>
<dbReference type="Pfam" id="PF01032">
    <property type="entry name" value="FecCD"/>
    <property type="match status" value="1"/>
</dbReference>
<dbReference type="SUPFAM" id="SSF81345">
    <property type="entry name" value="ABC transporter involved in vitamin B12 uptake, BtuC"/>
    <property type="match status" value="1"/>
</dbReference>
<accession>A9MFB6</accession>
<sequence length="329" mass="35258">MDNMLTFARQQQRRNVRWLLSLSLLVLLATLLSLCAGEQWIAPGDWLSSRGELFVWQIRLPRTLAVLLVGASLALSGAVMQALFENPLAEPGLLGVSNGAGVGLIAAVLLGQGQLPGWSLGLCAIAGALTITLILLRFARRHLSTSRLLLAGVALGIICSALMTWAIYFSTSFDLRQLMYWMMGGFGGVDWQQSWLMTALIPVLIWICCQSQPMNILALGETPARQLGLPLWLWRNLLVVATGWMVGVSVAMAGAIGFIGLVIPHILRLCGLTDHRVLLPGCALAGAIALLLADVVARLALASAELPIGVVTATLGAPIFIWLLLKSAR</sequence>
<comment type="function">
    <text evidence="1">Part of the ABC transporter complex BtuCDF involved in vitamin B12 import. Involved in the translocation of the substrate across the membrane.</text>
</comment>
<comment type="subunit">
    <text evidence="1">The complex is composed of two ATP-binding proteins (BtuD), two transmembrane proteins (BtuC) and a solute-binding protein (BtuF).</text>
</comment>
<comment type="subcellular location">
    <subcellularLocation>
        <location evidence="1">Cell inner membrane</location>
        <topology evidence="1">Multi-pass membrane protein</topology>
    </subcellularLocation>
</comment>
<comment type="similarity">
    <text evidence="1">Belongs to the binding-protein-dependent transport system permease family. FecCD subfamily.</text>
</comment>
<keyword id="KW-0997">Cell inner membrane</keyword>
<keyword id="KW-1003">Cell membrane</keyword>
<keyword id="KW-0472">Membrane</keyword>
<keyword id="KW-1185">Reference proteome</keyword>
<keyword id="KW-0812">Transmembrane</keyword>
<keyword id="KW-1133">Transmembrane helix</keyword>
<keyword id="KW-0813">Transport</keyword>